<gene>
    <name evidence="1" type="primary">hisG</name>
    <name type="ordered locus">Mjls_3157</name>
</gene>
<protein>
    <recommendedName>
        <fullName evidence="1">ATP phosphoribosyltransferase</fullName>
        <shortName evidence="1">ATP-PRT</shortName>
        <shortName evidence="1">ATP-PRTase</shortName>
        <ecNumber evidence="1">2.4.2.17</ecNumber>
    </recommendedName>
</protein>
<organism>
    <name type="scientific">Mycobacterium sp. (strain JLS)</name>
    <dbReference type="NCBI Taxonomy" id="164757"/>
    <lineage>
        <taxon>Bacteria</taxon>
        <taxon>Bacillati</taxon>
        <taxon>Actinomycetota</taxon>
        <taxon>Actinomycetes</taxon>
        <taxon>Mycobacteriales</taxon>
        <taxon>Mycobacteriaceae</taxon>
        <taxon>Mycobacterium</taxon>
    </lineage>
</organism>
<keyword id="KW-0028">Amino-acid biosynthesis</keyword>
<keyword id="KW-0067">ATP-binding</keyword>
<keyword id="KW-0963">Cytoplasm</keyword>
<keyword id="KW-0328">Glycosyltransferase</keyword>
<keyword id="KW-0368">Histidine biosynthesis</keyword>
<keyword id="KW-0460">Magnesium</keyword>
<keyword id="KW-0479">Metal-binding</keyword>
<keyword id="KW-0547">Nucleotide-binding</keyword>
<keyword id="KW-0808">Transferase</keyword>
<reference key="1">
    <citation type="submission" date="2007-02" db="EMBL/GenBank/DDBJ databases">
        <title>Complete sequence of Mycobacterium sp. JLS.</title>
        <authorList>
            <consortium name="US DOE Joint Genome Institute"/>
            <person name="Copeland A."/>
            <person name="Lucas S."/>
            <person name="Lapidus A."/>
            <person name="Barry K."/>
            <person name="Detter J.C."/>
            <person name="Glavina del Rio T."/>
            <person name="Hammon N."/>
            <person name="Israni S."/>
            <person name="Dalin E."/>
            <person name="Tice H."/>
            <person name="Pitluck S."/>
            <person name="Chain P."/>
            <person name="Malfatti S."/>
            <person name="Shin M."/>
            <person name="Vergez L."/>
            <person name="Schmutz J."/>
            <person name="Larimer F."/>
            <person name="Land M."/>
            <person name="Hauser L."/>
            <person name="Kyrpides N."/>
            <person name="Mikhailova N."/>
            <person name="Miller C.D."/>
            <person name="Anderson A.J."/>
            <person name="Sims R.C."/>
            <person name="Richardson P."/>
        </authorList>
    </citation>
    <scope>NUCLEOTIDE SEQUENCE [LARGE SCALE GENOMIC DNA]</scope>
    <source>
        <strain>JLS</strain>
    </source>
</reference>
<dbReference type="EC" id="2.4.2.17" evidence="1"/>
<dbReference type="EMBL" id="CP000580">
    <property type="protein sequence ID" value="ABN98936.1"/>
    <property type="molecule type" value="Genomic_DNA"/>
</dbReference>
<dbReference type="SMR" id="A3Q1A9"/>
<dbReference type="KEGG" id="mjl:Mjls_3157"/>
<dbReference type="HOGENOM" id="CLU_038115_1_1_11"/>
<dbReference type="BioCyc" id="MSP164757:G1G8C-3182-MONOMER"/>
<dbReference type="UniPathway" id="UPA00031">
    <property type="reaction ID" value="UER00006"/>
</dbReference>
<dbReference type="GO" id="GO:0005737">
    <property type="term" value="C:cytoplasm"/>
    <property type="evidence" value="ECO:0007669"/>
    <property type="project" value="UniProtKB-SubCell"/>
</dbReference>
<dbReference type="GO" id="GO:0005524">
    <property type="term" value="F:ATP binding"/>
    <property type="evidence" value="ECO:0007669"/>
    <property type="project" value="UniProtKB-KW"/>
</dbReference>
<dbReference type="GO" id="GO:0003879">
    <property type="term" value="F:ATP phosphoribosyltransferase activity"/>
    <property type="evidence" value="ECO:0007669"/>
    <property type="project" value="UniProtKB-UniRule"/>
</dbReference>
<dbReference type="GO" id="GO:0000287">
    <property type="term" value="F:magnesium ion binding"/>
    <property type="evidence" value="ECO:0007669"/>
    <property type="project" value="UniProtKB-UniRule"/>
</dbReference>
<dbReference type="GO" id="GO:0000105">
    <property type="term" value="P:L-histidine biosynthetic process"/>
    <property type="evidence" value="ECO:0007669"/>
    <property type="project" value="UniProtKB-UniRule"/>
</dbReference>
<dbReference type="CDD" id="cd13591">
    <property type="entry name" value="PBP2_HisGL1"/>
    <property type="match status" value="1"/>
</dbReference>
<dbReference type="FunFam" id="3.30.70.120:FF:000003">
    <property type="entry name" value="ATP phosphoribosyltransferase"/>
    <property type="match status" value="1"/>
</dbReference>
<dbReference type="FunFam" id="3.40.190.10:FF:000136">
    <property type="entry name" value="ATP phosphoribosyltransferase"/>
    <property type="match status" value="1"/>
</dbReference>
<dbReference type="Gene3D" id="3.30.70.120">
    <property type="match status" value="1"/>
</dbReference>
<dbReference type="Gene3D" id="3.40.190.10">
    <property type="entry name" value="Periplasmic binding protein-like II"/>
    <property type="match status" value="2"/>
</dbReference>
<dbReference type="HAMAP" id="MF_00079">
    <property type="entry name" value="HisG_Long"/>
    <property type="match status" value="1"/>
</dbReference>
<dbReference type="InterPro" id="IPR020621">
    <property type="entry name" value="ATP-PRT_HisG_long"/>
</dbReference>
<dbReference type="InterPro" id="IPR013820">
    <property type="entry name" value="ATP_PRibTrfase_cat"/>
</dbReference>
<dbReference type="InterPro" id="IPR018198">
    <property type="entry name" value="ATP_PRibTrfase_CS"/>
</dbReference>
<dbReference type="InterPro" id="IPR001348">
    <property type="entry name" value="ATP_PRibTrfase_HisG"/>
</dbReference>
<dbReference type="InterPro" id="IPR013115">
    <property type="entry name" value="HisG_C"/>
</dbReference>
<dbReference type="InterPro" id="IPR011322">
    <property type="entry name" value="N-reg_PII-like_a/b"/>
</dbReference>
<dbReference type="InterPro" id="IPR015867">
    <property type="entry name" value="N-reg_PII/ATP_PRibTrfase_C"/>
</dbReference>
<dbReference type="NCBIfam" id="TIGR00070">
    <property type="entry name" value="hisG"/>
    <property type="match status" value="1"/>
</dbReference>
<dbReference type="NCBIfam" id="TIGR03455">
    <property type="entry name" value="HisG_C-term"/>
    <property type="match status" value="1"/>
</dbReference>
<dbReference type="PANTHER" id="PTHR21403:SF8">
    <property type="entry name" value="ATP PHOSPHORIBOSYLTRANSFERASE"/>
    <property type="match status" value="1"/>
</dbReference>
<dbReference type="PANTHER" id="PTHR21403">
    <property type="entry name" value="ATP PHOSPHORIBOSYLTRANSFERASE ATP-PRTASE"/>
    <property type="match status" value="1"/>
</dbReference>
<dbReference type="Pfam" id="PF01634">
    <property type="entry name" value="HisG"/>
    <property type="match status" value="1"/>
</dbReference>
<dbReference type="Pfam" id="PF08029">
    <property type="entry name" value="HisG_C"/>
    <property type="match status" value="1"/>
</dbReference>
<dbReference type="SUPFAM" id="SSF54913">
    <property type="entry name" value="GlnB-like"/>
    <property type="match status" value="1"/>
</dbReference>
<dbReference type="SUPFAM" id="SSF53850">
    <property type="entry name" value="Periplasmic binding protein-like II"/>
    <property type="match status" value="1"/>
</dbReference>
<dbReference type="PROSITE" id="PS01316">
    <property type="entry name" value="ATP_P_PHORIBOSYLTR"/>
    <property type="match status" value="1"/>
</dbReference>
<name>HIS1_MYCSJ</name>
<sequence>MLRVAVPNKGTLSEPAAEILSEAGYRRRTDTKDLTVVDPANNVEFFFLRPKDIAIYVGSGQLDLGITGRDLAAESDAPVRERLALGFGSSTFRYAAPAGRDWAPEDLAGRRIATAFPNLVRKDLAGRGIEATVIRLDGAVEISVALGVADAIADVVGSGRTLGLHNLVAFGDSLCDSEAVLIERDGAGDENAAARDQLTARVQGVVFGQQYLMLDYDCPRHVLDRATEVTPGLESPTIAPLADQDWVAVRALVPRRDVNSIMDELAAIGAKAILASDIRFCRF</sequence>
<comment type="function">
    <text evidence="1">Catalyzes the condensation of ATP and 5-phosphoribose 1-diphosphate to form N'-(5'-phosphoribosyl)-ATP (PR-ATP). Has a crucial role in the pathway because the rate of histidine biosynthesis seems to be controlled primarily by regulation of HisG enzymatic activity.</text>
</comment>
<comment type="catalytic activity">
    <reaction evidence="1">
        <text>1-(5-phospho-beta-D-ribosyl)-ATP + diphosphate = 5-phospho-alpha-D-ribose 1-diphosphate + ATP</text>
        <dbReference type="Rhea" id="RHEA:18473"/>
        <dbReference type="ChEBI" id="CHEBI:30616"/>
        <dbReference type="ChEBI" id="CHEBI:33019"/>
        <dbReference type="ChEBI" id="CHEBI:58017"/>
        <dbReference type="ChEBI" id="CHEBI:73183"/>
        <dbReference type="EC" id="2.4.2.17"/>
    </reaction>
</comment>
<comment type="cofactor">
    <cofactor evidence="1">
        <name>Mg(2+)</name>
        <dbReference type="ChEBI" id="CHEBI:18420"/>
    </cofactor>
</comment>
<comment type="activity regulation">
    <text evidence="1">Feedback inhibited by histidine.</text>
</comment>
<comment type="pathway">
    <text evidence="1">Amino-acid biosynthesis; L-histidine biosynthesis; L-histidine from 5-phospho-alpha-D-ribose 1-diphosphate: step 1/9.</text>
</comment>
<comment type="subunit">
    <text evidence="1">Equilibrium between an active dimeric form, an inactive hexameric form and higher aggregates. Interconversion between the various forms is largely reversible and is influenced by the natural substrates and inhibitors of the enzyme.</text>
</comment>
<comment type="subcellular location">
    <subcellularLocation>
        <location evidence="1">Cytoplasm</location>
    </subcellularLocation>
</comment>
<comment type="similarity">
    <text evidence="1">Belongs to the ATP phosphoribosyltransferase family. Long subfamily.</text>
</comment>
<evidence type="ECO:0000255" key="1">
    <source>
        <dbReference type="HAMAP-Rule" id="MF_00079"/>
    </source>
</evidence>
<feature type="chain" id="PRO_1000004476" description="ATP phosphoribosyltransferase">
    <location>
        <begin position="1"/>
        <end position="283"/>
    </location>
</feature>
<accession>A3Q1A9</accession>
<proteinExistence type="inferred from homology"/>